<dbReference type="EC" id="3.1.3.48" evidence="5"/>
<dbReference type="EC" id="3.1.3.2" evidence="2"/>
<dbReference type="EMBL" id="AE014297">
    <property type="protein sequence ID" value="AAF54981.3"/>
    <property type="molecule type" value="Genomic_DNA"/>
</dbReference>
<dbReference type="EMBL" id="AY089477">
    <property type="protein sequence ID" value="AAL90215.1"/>
    <property type="molecule type" value="mRNA"/>
</dbReference>
<dbReference type="RefSeq" id="NP_001027188.1">
    <property type="nucleotide sequence ID" value="NM_001032017.2"/>
</dbReference>
<dbReference type="SMR" id="P82891"/>
<dbReference type="FunCoup" id="P82891">
    <property type="interactions" value="738"/>
</dbReference>
<dbReference type="STRING" id="7227.FBpp0100064"/>
<dbReference type="PaxDb" id="7227-FBpp0100064"/>
<dbReference type="DNASU" id="3772427"/>
<dbReference type="EnsemblMetazoa" id="FBtr0091746">
    <property type="protein sequence ID" value="FBpp0100064"/>
    <property type="gene ID" value="FBgn0040076"/>
</dbReference>
<dbReference type="GeneID" id="3772427"/>
<dbReference type="KEGG" id="dme:Dmel_CG33747"/>
<dbReference type="UCSC" id="CG33747-RB">
    <property type="organism name" value="d. melanogaster"/>
</dbReference>
<dbReference type="AGR" id="FB:FBgn0040076"/>
<dbReference type="CTD" id="3772427"/>
<dbReference type="FlyBase" id="FBgn0040076">
    <property type="gene designation" value="primo-2"/>
</dbReference>
<dbReference type="VEuPathDB" id="VectorBase:FBgn0040076"/>
<dbReference type="eggNOG" id="KOG3217">
    <property type="taxonomic scope" value="Eukaryota"/>
</dbReference>
<dbReference type="GeneTree" id="ENSGT00940000167505"/>
<dbReference type="HOGENOM" id="CLU_071415_2_0_1"/>
<dbReference type="InParanoid" id="P82891"/>
<dbReference type="OMA" id="QGEWHVE"/>
<dbReference type="OrthoDB" id="3388at2759"/>
<dbReference type="PhylomeDB" id="P82891"/>
<dbReference type="BioGRID-ORCS" id="3772427">
    <property type="hits" value="0 hits in 3 CRISPR screens"/>
</dbReference>
<dbReference type="GenomeRNAi" id="3772427"/>
<dbReference type="PRO" id="PR:P82891"/>
<dbReference type="Proteomes" id="UP000000803">
    <property type="component" value="Chromosome 3R"/>
</dbReference>
<dbReference type="Bgee" id="FBgn0040076">
    <property type="expression patterns" value="Expressed in imaginal disc and 9 other cell types or tissues"/>
</dbReference>
<dbReference type="GO" id="GO:0005737">
    <property type="term" value="C:cytoplasm"/>
    <property type="evidence" value="ECO:0000250"/>
    <property type="project" value="FlyBase"/>
</dbReference>
<dbReference type="GO" id="GO:0003993">
    <property type="term" value="F:acid phosphatase activity"/>
    <property type="evidence" value="ECO:0007669"/>
    <property type="project" value="UniProtKB-EC"/>
</dbReference>
<dbReference type="GO" id="GO:0004726">
    <property type="term" value="F:non-membrane spanning protein tyrosine phosphatase activity"/>
    <property type="evidence" value="ECO:0007669"/>
    <property type="project" value="InterPro"/>
</dbReference>
<dbReference type="GO" id="GO:0004725">
    <property type="term" value="F:protein tyrosine phosphatase activity"/>
    <property type="evidence" value="ECO:0000314"/>
    <property type="project" value="FlyBase"/>
</dbReference>
<dbReference type="CDD" id="cd16343">
    <property type="entry name" value="LMWPTP"/>
    <property type="match status" value="1"/>
</dbReference>
<dbReference type="FunFam" id="3.40.50.2300:FF:000105">
    <property type="entry name" value="Low molecular weight phosphotyrosine protein"/>
    <property type="match status" value="1"/>
</dbReference>
<dbReference type="Gene3D" id="3.40.50.2300">
    <property type="match status" value="1"/>
</dbReference>
<dbReference type="InterPro" id="IPR050438">
    <property type="entry name" value="LMW_PTPase"/>
</dbReference>
<dbReference type="InterPro" id="IPR023485">
    <property type="entry name" value="Ptyr_pPase"/>
</dbReference>
<dbReference type="InterPro" id="IPR036196">
    <property type="entry name" value="Ptyr_pPase_sf"/>
</dbReference>
<dbReference type="InterPro" id="IPR002115">
    <property type="entry name" value="Tyr_Pase_low_mol_wt_mml"/>
</dbReference>
<dbReference type="InterPro" id="IPR017867">
    <property type="entry name" value="Tyr_phospatase_low_mol_wt"/>
</dbReference>
<dbReference type="PANTHER" id="PTHR11717:SF7">
    <property type="entry name" value="LOW MOLECULAR WEIGHT PHOSPHOTYROSINE PROTEIN PHOSPHATASE"/>
    <property type="match status" value="1"/>
</dbReference>
<dbReference type="PANTHER" id="PTHR11717">
    <property type="entry name" value="LOW MOLECULAR WEIGHT PROTEIN TYROSINE PHOSPHATASE"/>
    <property type="match status" value="1"/>
</dbReference>
<dbReference type="Pfam" id="PF01451">
    <property type="entry name" value="LMWPc"/>
    <property type="match status" value="1"/>
</dbReference>
<dbReference type="PRINTS" id="PR00719">
    <property type="entry name" value="LMWPTPASE"/>
</dbReference>
<dbReference type="PRINTS" id="PR00720">
    <property type="entry name" value="MAMMALPTPASE"/>
</dbReference>
<dbReference type="SMART" id="SM00226">
    <property type="entry name" value="LMWPc"/>
    <property type="match status" value="1"/>
</dbReference>
<dbReference type="SUPFAM" id="SSF52788">
    <property type="entry name" value="Phosphotyrosine protein phosphatases I"/>
    <property type="match status" value="1"/>
</dbReference>
<protein>
    <recommendedName>
        <fullName>Low molecular weight phosphotyrosine protein phosphatase 2</fullName>
        <ecNumber evidence="5">3.1.3.48</ecNumber>
    </recommendedName>
    <alternativeName>
        <fullName>Low molecular weight cytosolic acid phosphatase 2</fullName>
        <ecNumber evidence="2">3.1.3.2</ecNumber>
    </alternativeName>
    <alternativeName>
        <fullName>PTPase 2</fullName>
    </alternativeName>
</protein>
<sequence>MGKRSQKSSVLMVCVGNLCRSPIAEAVMRDLVARAGLQGEWHVESAGIEDWHSGHQPDERALNVLARHNIEYNGKARVLAPEDFLEFDYIFAMDLSNLAALRRMAPKGTTAKLLILGNFGLKPDERIIEDPYYDIGEASFEEIYRQCSIACRNFLKQARLKQIM</sequence>
<comment type="function">
    <text evidence="2 3">Catalyzes the dephosphorylation of tyrosine phosphorylated proteins and low-MW aryl phosphates (PubMed:10675607). Can contribute to the regulation of a variety of developmental processes (PubMed:10675607).</text>
</comment>
<comment type="catalytic activity">
    <reaction evidence="5">
        <text>O-phospho-L-tyrosyl-[protein] + H2O = L-tyrosyl-[protein] + phosphate</text>
        <dbReference type="Rhea" id="RHEA:10684"/>
        <dbReference type="Rhea" id="RHEA-COMP:10136"/>
        <dbReference type="Rhea" id="RHEA-COMP:20101"/>
        <dbReference type="ChEBI" id="CHEBI:15377"/>
        <dbReference type="ChEBI" id="CHEBI:43474"/>
        <dbReference type="ChEBI" id="CHEBI:46858"/>
        <dbReference type="ChEBI" id="CHEBI:61978"/>
        <dbReference type="EC" id="3.1.3.48"/>
    </reaction>
    <physiologicalReaction direction="left-to-right" evidence="5">
        <dbReference type="Rhea" id="RHEA:10685"/>
    </physiologicalReaction>
</comment>
<comment type="catalytic activity">
    <reaction evidence="2">
        <text>a phosphate monoester + H2O = an alcohol + phosphate</text>
        <dbReference type="Rhea" id="RHEA:15017"/>
        <dbReference type="ChEBI" id="CHEBI:15377"/>
        <dbReference type="ChEBI" id="CHEBI:30879"/>
        <dbReference type="ChEBI" id="CHEBI:43474"/>
        <dbReference type="ChEBI" id="CHEBI:67140"/>
        <dbReference type="EC" id="3.1.3.2"/>
    </reaction>
    <physiologicalReaction direction="left-to-right" evidence="2">
        <dbReference type="Rhea" id="RHEA:15018"/>
    </physiologicalReaction>
</comment>
<comment type="subcellular location">
    <subcellularLocation>
        <location>Cytoplasm</location>
    </subcellularLocation>
</comment>
<comment type="tissue specificity">
    <text evidence="2">Cone cells and primary pigment cells in developing pupal retina.</text>
</comment>
<comment type="developmental stage">
    <text evidence="2">Embryo and adult.</text>
</comment>
<comment type="similarity">
    <text evidence="4">Belongs to the low molecular weight phosphotyrosine protein phosphatase family.</text>
</comment>
<feature type="chain" id="PRO_0000046563" description="Low molecular weight phosphotyrosine protein phosphatase 2">
    <location>
        <begin position="1"/>
        <end position="164"/>
    </location>
</feature>
<feature type="active site" description="Nucleophile" evidence="1">
    <location>
        <position position="14"/>
    </location>
</feature>
<feature type="active site" evidence="1">
    <location>
        <position position="20"/>
    </location>
</feature>
<feature type="active site" description="Proton donor" evidence="1">
    <location>
        <position position="130"/>
    </location>
</feature>
<feature type="mutagenesis site" description="Complete loss of activity." evidence="2">
    <original>C</original>
    <variation>S</variation>
    <location>
        <position position="14"/>
    </location>
</feature>
<feature type="sequence conflict" description="In Ref. 1." evidence="4" ref="1">
    <original>L</original>
    <variation>V</variation>
    <location>
        <position position="31"/>
    </location>
</feature>
<feature type="sequence conflict" description="In Ref. 1." evidence="4" ref="1">
    <original>A</original>
    <variation>V</variation>
    <location>
        <position position="111"/>
    </location>
</feature>
<name>PPAC2_DROME</name>
<reference key="1">
    <citation type="journal article" date="2000" name="Gene">
        <title>The Drosophila primo locus encodes two low-molecular-weight tyrosine phosphatases.</title>
        <authorList>
            <person name="Miller D.T."/>
            <person name="Read R."/>
            <person name="Rusconi J."/>
            <person name="Cagan R.L."/>
        </authorList>
    </citation>
    <scope>NUCLEOTIDE SEQUENCE [MRNA]</scope>
    <scope>MUTAGENESIS OF CYS-14</scope>
    <scope>FUNCTION</scope>
    <scope>TISSUE SPECIFICITY</scope>
    <scope>DEVELOPMENTAL STAGE</scope>
    <scope>CATALYTIC ACTIVITY</scope>
    <source>
        <tissue>Embryo</tissue>
        <tissue>Pupae</tissue>
    </source>
</reference>
<reference key="2">
    <citation type="journal article" date="2000" name="Science">
        <title>The genome sequence of Drosophila melanogaster.</title>
        <authorList>
            <person name="Adams M.D."/>
            <person name="Celniker S.E."/>
            <person name="Holt R.A."/>
            <person name="Evans C.A."/>
            <person name="Gocayne J.D."/>
            <person name="Amanatides P.G."/>
            <person name="Scherer S.E."/>
            <person name="Li P.W."/>
            <person name="Hoskins R.A."/>
            <person name="Galle R.F."/>
            <person name="George R.A."/>
            <person name="Lewis S.E."/>
            <person name="Richards S."/>
            <person name="Ashburner M."/>
            <person name="Henderson S.N."/>
            <person name="Sutton G.G."/>
            <person name="Wortman J.R."/>
            <person name="Yandell M.D."/>
            <person name="Zhang Q."/>
            <person name="Chen L.X."/>
            <person name="Brandon R.C."/>
            <person name="Rogers Y.-H.C."/>
            <person name="Blazej R.G."/>
            <person name="Champe M."/>
            <person name="Pfeiffer B.D."/>
            <person name="Wan K.H."/>
            <person name="Doyle C."/>
            <person name="Baxter E.G."/>
            <person name="Helt G."/>
            <person name="Nelson C.R."/>
            <person name="Miklos G.L.G."/>
            <person name="Abril J.F."/>
            <person name="Agbayani A."/>
            <person name="An H.-J."/>
            <person name="Andrews-Pfannkoch C."/>
            <person name="Baldwin D."/>
            <person name="Ballew R.M."/>
            <person name="Basu A."/>
            <person name="Baxendale J."/>
            <person name="Bayraktaroglu L."/>
            <person name="Beasley E.M."/>
            <person name="Beeson K.Y."/>
            <person name="Benos P.V."/>
            <person name="Berman B.P."/>
            <person name="Bhandari D."/>
            <person name="Bolshakov S."/>
            <person name="Borkova D."/>
            <person name="Botchan M.R."/>
            <person name="Bouck J."/>
            <person name="Brokstein P."/>
            <person name="Brottier P."/>
            <person name="Burtis K.C."/>
            <person name="Busam D.A."/>
            <person name="Butler H."/>
            <person name="Cadieu E."/>
            <person name="Center A."/>
            <person name="Chandra I."/>
            <person name="Cherry J.M."/>
            <person name="Cawley S."/>
            <person name="Dahlke C."/>
            <person name="Davenport L.B."/>
            <person name="Davies P."/>
            <person name="de Pablos B."/>
            <person name="Delcher A."/>
            <person name="Deng Z."/>
            <person name="Mays A.D."/>
            <person name="Dew I."/>
            <person name="Dietz S.M."/>
            <person name="Dodson K."/>
            <person name="Doup L.E."/>
            <person name="Downes M."/>
            <person name="Dugan-Rocha S."/>
            <person name="Dunkov B.C."/>
            <person name="Dunn P."/>
            <person name="Durbin K.J."/>
            <person name="Evangelista C.C."/>
            <person name="Ferraz C."/>
            <person name="Ferriera S."/>
            <person name="Fleischmann W."/>
            <person name="Fosler C."/>
            <person name="Gabrielian A.E."/>
            <person name="Garg N.S."/>
            <person name="Gelbart W.M."/>
            <person name="Glasser K."/>
            <person name="Glodek A."/>
            <person name="Gong F."/>
            <person name="Gorrell J.H."/>
            <person name="Gu Z."/>
            <person name="Guan P."/>
            <person name="Harris M."/>
            <person name="Harris N.L."/>
            <person name="Harvey D.A."/>
            <person name="Heiman T.J."/>
            <person name="Hernandez J.R."/>
            <person name="Houck J."/>
            <person name="Hostin D."/>
            <person name="Houston K.A."/>
            <person name="Howland T.J."/>
            <person name="Wei M.-H."/>
            <person name="Ibegwam C."/>
            <person name="Jalali M."/>
            <person name="Kalush F."/>
            <person name="Karpen G.H."/>
            <person name="Ke Z."/>
            <person name="Kennison J.A."/>
            <person name="Ketchum K.A."/>
            <person name="Kimmel B.E."/>
            <person name="Kodira C.D."/>
            <person name="Kraft C.L."/>
            <person name="Kravitz S."/>
            <person name="Kulp D."/>
            <person name="Lai Z."/>
            <person name="Lasko P."/>
            <person name="Lei Y."/>
            <person name="Levitsky A.A."/>
            <person name="Li J.H."/>
            <person name="Li Z."/>
            <person name="Liang Y."/>
            <person name="Lin X."/>
            <person name="Liu X."/>
            <person name="Mattei B."/>
            <person name="McIntosh T.C."/>
            <person name="McLeod M.P."/>
            <person name="McPherson D."/>
            <person name="Merkulov G."/>
            <person name="Milshina N.V."/>
            <person name="Mobarry C."/>
            <person name="Morris J."/>
            <person name="Moshrefi A."/>
            <person name="Mount S.M."/>
            <person name="Moy M."/>
            <person name="Murphy B."/>
            <person name="Murphy L."/>
            <person name="Muzny D.M."/>
            <person name="Nelson D.L."/>
            <person name="Nelson D.R."/>
            <person name="Nelson K.A."/>
            <person name="Nixon K."/>
            <person name="Nusskern D.R."/>
            <person name="Pacleb J.M."/>
            <person name="Palazzolo M."/>
            <person name="Pittman G.S."/>
            <person name="Pan S."/>
            <person name="Pollard J."/>
            <person name="Puri V."/>
            <person name="Reese M.G."/>
            <person name="Reinert K."/>
            <person name="Remington K."/>
            <person name="Saunders R.D.C."/>
            <person name="Scheeler F."/>
            <person name="Shen H."/>
            <person name="Shue B.C."/>
            <person name="Siden-Kiamos I."/>
            <person name="Simpson M."/>
            <person name="Skupski M.P."/>
            <person name="Smith T.J."/>
            <person name="Spier E."/>
            <person name="Spradling A.C."/>
            <person name="Stapleton M."/>
            <person name="Strong R."/>
            <person name="Sun E."/>
            <person name="Svirskas R."/>
            <person name="Tector C."/>
            <person name="Turner R."/>
            <person name="Venter E."/>
            <person name="Wang A.H."/>
            <person name="Wang X."/>
            <person name="Wang Z.-Y."/>
            <person name="Wassarman D.A."/>
            <person name="Weinstock G.M."/>
            <person name="Weissenbach J."/>
            <person name="Williams S.M."/>
            <person name="Woodage T."/>
            <person name="Worley K.C."/>
            <person name="Wu D."/>
            <person name="Yang S."/>
            <person name="Yao Q.A."/>
            <person name="Ye J."/>
            <person name="Yeh R.-F."/>
            <person name="Zaveri J.S."/>
            <person name="Zhan M."/>
            <person name="Zhang G."/>
            <person name="Zhao Q."/>
            <person name="Zheng L."/>
            <person name="Zheng X.H."/>
            <person name="Zhong F.N."/>
            <person name="Zhong W."/>
            <person name="Zhou X."/>
            <person name="Zhu S.C."/>
            <person name="Zhu X."/>
            <person name="Smith H.O."/>
            <person name="Gibbs R.A."/>
            <person name="Myers E.W."/>
            <person name="Rubin G.M."/>
            <person name="Venter J.C."/>
        </authorList>
    </citation>
    <scope>NUCLEOTIDE SEQUENCE [LARGE SCALE GENOMIC DNA]</scope>
    <source>
        <strain>Berkeley</strain>
    </source>
</reference>
<reference key="3">
    <citation type="journal article" date="2002" name="Genome Biol.">
        <title>Annotation of the Drosophila melanogaster euchromatic genome: a systematic review.</title>
        <authorList>
            <person name="Misra S."/>
            <person name="Crosby M.A."/>
            <person name="Mungall C.J."/>
            <person name="Matthews B.B."/>
            <person name="Campbell K.S."/>
            <person name="Hradecky P."/>
            <person name="Huang Y."/>
            <person name="Kaminker J.S."/>
            <person name="Millburn G.H."/>
            <person name="Prochnik S.E."/>
            <person name="Smith C.D."/>
            <person name="Tupy J.L."/>
            <person name="Whitfield E.J."/>
            <person name="Bayraktaroglu L."/>
            <person name="Berman B.P."/>
            <person name="Bettencourt B.R."/>
            <person name="Celniker S.E."/>
            <person name="de Grey A.D.N.J."/>
            <person name="Drysdale R.A."/>
            <person name="Harris N.L."/>
            <person name="Richter J."/>
            <person name="Russo S."/>
            <person name="Schroeder A.J."/>
            <person name="Shu S.Q."/>
            <person name="Stapleton M."/>
            <person name="Yamada C."/>
            <person name="Ashburner M."/>
            <person name="Gelbart W.M."/>
            <person name="Rubin G.M."/>
            <person name="Lewis S.E."/>
        </authorList>
    </citation>
    <scope>GENOME REANNOTATION</scope>
    <source>
        <strain>Berkeley</strain>
    </source>
</reference>
<reference key="4">
    <citation type="journal article" date="2002" name="Genome Biol.">
        <title>A Drosophila full-length cDNA resource.</title>
        <authorList>
            <person name="Stapleton M."/>
            <person name="Carlson J.W."/>
            <person name="Brokstein P."/>
            <person name="Yu C."/>
            <person name="Champe M."/>
            <person name="George R.A."/>
            <person name="Guarin H."/>
            <person name="Kronmiller B."/>
            <person name="Pacleb J.M."/>
            <person name="Park S."/>
            <person name="Wan K.H."/>
            <person name="Rubin G.M."/>
            <person name="Celniker S.E."/>
        </authorList>
    </citation>
    <scope>NUCLEOTIDE SEQUENCE [LARGE SCALE MRNA]</scope>
    <source>
        <strain>Berkeley</strain>
        <tissue>Testis</tissue>
    </source>
</reference>
<gene>
    <name type="primary">primo-2</name>
    <name type="ORF">CG31311</name>
</gene>
<evidence type="ECO:0000250" key="1">
    <source>
        <dbReference type="UniProtKB" id="P11064"/>
    </source>
</evidence>
<evidence type="ECO:0000269" key="2">
    <source>
    </source>
</evidence>
<evidence type="ECO:0000303" key="3">
    <source>
    </source>
</evidence>
<evidence type="ECO:0000305" key="4"/>
<evidence type="ECO:0000305" key="5">
    <source>
    </source>
</evidence>
<organism>
    <name type="scientific">Drosophila melanogaster</name>
    <name type="common">Fruit fly</name>
    <dbReference type="NCBI Taxonomy" id="7227"/>
    <lineage>
        <taxon>Eukaryota</taxon>
        <taxon>Metazoa</taxon>
        <taxon>Ecdysozoa</taxon>
        <taxon>Arthropoda</taxon>
        <taxon>Hexapoda</taxon>
        <taxon>Insecta</taxon>
        <taxon>Pterygota</taxon>
        <taxon>Neoptera</taxon>
        <taxon>Endopterygota</taxon>
        <taxon>Diptera</taxon>
        <taxon>Brachycera</taxon>
        <taxon>Muscomorpha</taxon>
        <taxon>Ephydroidea</taxon>
        <taxon>Drosophilidae</taxon>
        <taxon>Drosophila</taxon>
        <taxon>Sophophora</taxon>
    </lineage>
</organism>
<accession>P82891</accession>
<accession>Q0KI75</accession>
<accession>Q9VFR9</accession>
<proteinExistence type="evidence at protein level"/>
<keyword id="KW-0963">Cytoplasm</keyword>
<keyword id="KW-0378">Hydrolase</keyword>
<keyword id="KW-0904">Protein phosphatase</keyword>
<keyword id="KW-1185">Reference proteome</keyword>